<name>QUEF_NITV2</name>
<dbReference type="EC" id="1.7.1.13" evidence="1"/>
<dbReference type="EMBL" id="AE017285">
    <property type="protein sequence ID" value="AAS95443.1"/>
    <property type="molecule type" value="Genomic_DNA"/>
</dbReference>
<dbReference type="RefSeq" id="WP_010938262.1">
    <property type="nucleotide sequence ID" value="NC_002937.3"/>
</dbReference>
<dbReference type="RefSeq" id="YP_010184.1">
    <property type="nucleotide sequence ID" value="NC_002937.3"/>
</dbReference>
<dbReference type="SMR" id="Q72DG6"/>
<dbReference type="STRING" id="882.DVU_0963"/>
<dbReference type="PaxDb" id="882-DVU_0963"/>
<dbReference type="EnsemblBacteria" id="AAS95443">
    <property type="protein sequence ID" value="AAS95443"/>
    <property type="gene ID" value="DVU_0963"/>
</dbReference>
<dbReference type="KEGG" id="dvu:DVU_0963"/>
<dbReference type="PATRIC" id="fig|882.5.peg.905"/>
<dbReference type="eggNOG" id="COG0780">
    <property type="taxonomic scope" value="Bacteria"/>
</dbReference>
<dbReference type="HOGENOM" id="CLU_102489_0_1_7"/>
<dbReference type="OrthoDB" id="9789995at2"/>
<dbReference type="PhylomeDB" id="Q72DG6"/>
<dbReference type="UniPathway" id="UPA00392"/>
<dbReference type="Proteomes" id="UP000002194">
    <property type="component" value="Chromosome"/>
</dbReference>
<dbReference type="GO" id="GO:0005737">
    <property type="term" value="C:cytoplasm"/>
    <property type="evidence" value="ECO:0007669"/>
    <property type="project" value="UniProtKB-SubCell"/>
</dbReference>
<dbReference type="GO" id="GO:0033739">
    <property type="term" value="F:preQ1 synthase activity"/>
    <property type="evidence" value="ECO:0007669"/>
    <property type="project" value="UniProtKB-UniRule"/>
</dbReference>
<dbReference type="GO" id="GO:0008616">
    <property type="term" value="P:queuosine biosynthetic process"/>
    <property type="evidence" value="ECO:0007669"/>
    <property type="project" value="UniProtKB-UniRule"/>
</dbReference>
<dbReference type="GO" id="GO:0006400">
    <property type="term" value="P:tRNA modification"/>
    <property type="evidence" value="ECO:0007669"/>
    <property type="project" value="UniProtKB-UniRule"/>
</dbReference>
<dbReference type="Gene3D" id="3.30.1130.10">
    <property type="match status" value="1"/>
</dbReference>
<dbReference type="HAMAP" id="MF_00818">
    <property type="entry name" value="QueF_type1"/>
    <property type="match status" value="1"/>
</dbReference>
<dbReference type="InterPro" id="IPR043133">
    <property type="entry name" value="GTP-CH-I_C/QueF"/>
</dbReference>
<dbReference type="InterPro" id="IPR050084">
    <property type="entry name" value="NADPH_dep_7-cyano-7-deazaG_red"/>
</dbReference>
<dbReference type="InterPro" id="IPR029500">
    <property type="entry name" value="QueF"/>
</dbReference>
<dbReference type="InterPro" id="IPR016856">
    <property type="entry name" value="QueF_type1"/>
</dbReference>
<dbReference type="NCBIfam" id="TIGR03139">
    <property type="entry name" value="QueF-II"/>
    <property type="match status" value="1"/>
</dbReference>
<dbReference type="PANTHER" id="PTHR34354">
    <property type="entry name" value="NADPH-DEPENDENT 7-CYANO-7-DEAZAGUANINE REDUCTASE"/>
    <property type="match status" value="1"/>
</dbReference>
<dbReference type="PANTHER" id="PTHR34354:SF1">
    <property type="entry name" value="NADPH-DEPENDENT 7-CYANO-7-DEAZAGUANINE REDUCTASE"/>
    <property type="match status" value="1"/>
</dbReference>
<dbReference type="Pfam" id="PF14489">
    <property type="entry name" value="QueF"/>
    <property type="match status" value="1"/>
</dbReference>
<dbReference type="PIRSF" id="PIRSF027377">
    <property type="entry name" value="Nitrile_oxidored_QueF"/>
    <property type="match status" value="1"/>
</dbReference>
<dbReference type="SUPFAM" id="SSF55620">
    <property type="entry name" value="Tetrahydrobiopterin biosynthesis enzymes-like"/>
    <property type="match status" value="1"/>
</dbReference>
<reference key="1">
    <citation type="journal article" date="2004" name="Nat. Biotechnol.">
        <title>The genome sequence of the anaerobic, sulfate-reducing bacterium Desulfovibrio vulgaris Hildenborough.</title>
        <authorList>
            <person name="Heidelberg J.F."/>
            <person name="Seshadri R."/>
            <person name="Haveman S.A."/>
            <person name="Hemme C.L."/>
            <person name="Paulsen I.T."/>
            <person name="Kolonay J.F."/>
            <person name="Eisen J.A."/>
            <person name="Ward N.L."/>
            <person name="Methe B.A."/>
            <person name="Brinkac L.M."/>
            <person name="Daugherty S.C."/>
            <person name="DeBoy R.T."/>
            <person name="Dodson R.J."/>
            <person name="Durkin A.S."/>
            <person name="Madupu R."/>
            <person name="Nelson W.C."/>
            <person name="Sullivan S.A."/>
            <person name="Fouts D.E."/>
            <person name="Haft D.H."/>
            <person name="Selengut J."/>
            <person name="Peterson J.D."/>
            <person name="Davidsen T.M."/>
            <person name="Zafar N."/>
            <person name="Zhou L."/>
            <person name="Radune D."/>
            <person name="Dimitrov G."/>
            <person name="Hance M."/>
            <person name="Tran K."/>
            <person name="Khouri H.M."/>
            <person name="Gill J."/>
            <person name="Utterback T.R."/>
            <person name="Feldblyum T.V."/>
            <person name="Wall J.D."/>
            <person name="Voordouw G."/>
            <person name="Fraser C.M."/>
        </authorList>
    </citation>
    <scope>NUCLEOTIDE SEQUENCE [LARGE SCALE GENOMIC DNA]</scope>
    <source>
        <strain>ATCC 29579 / DSM 644 / CCUG 34227 / NCIMB 8303 / VKM B-1760 / Hildenborough</strain>
    </source>
</reference>
<sequence length="165" mass="18924">MTTRSTDQTEHLRALGQKTPYPAAGPSTDLLEAFPNRFPDRPYIVSIAFPEFTSLCPVTGQPDFATIVVEYIPDQFCVESKSFKVYMFAFRDHQSFMETITNTILDDMTTKLQPLWCRVKGLFTPRGGTQLHVFAERFKEVEPARAQALRDMVSEWKRENNRHGA</sequence>
<accession>Q72DG6</accession>
<proteinExistence type="inferred from homology"/>
<organism>
    <name type="scientific">Nitratidesulfovibrio vulgaris (strain ATCC 29579 / DSM 644 / CCUG 34227 / NCIMB 8303 / VKM B-1760 / Hildenborough)</name>
    <name type="common">Desulfovibrio vulgaris</name>
    <dbReference type="NCBI Taxonomy" id="882"/>
    <lineage>
        <taxon>Bacteria</taxon>
        <taxon>Pseudomonadati</taxon>
        <taxon>Thermodesulfobacteriota</taxon>
        <taxon>Desulfovibrionia</taxon>
        <taxon>Desulfovibrionales</taxon>
        <taxon>Desulfovibrionaceae</taxon>
        <taxon>Nitratidesulfovibrio</taxon>
    </lineage>
</organism>
<protein>
    <recommendedName>
        <fullName evidence="1">NADPH-dependent 7-cyano-7-deazaguanine reductase</fullName>
        <ecNumber evidence="1">1.7.1.13</ecNumber>
    </recommendedName>
    <alternativeName>
        <fullName evidence="1">7-cyano-7-carbaguanine reductase</fullName>
    </alternativeName>
    <alternativeName>
        <fullName evidence="1">NADPH-dependent nitrile oxidoreductase</fullName>
    </alternativeName>
    <alternativeName>
        <fullName evidence="1">PreQ(0) reductase</fullName>
    </alternativeName>
</protein>
<feature type="chain" id="PRO_0000162971" description="NADPH-dependent 7-cyano-7-deazaguanine reductase">
    <location>
        <begin position="1"/>
        <end position="165"/>
    </location>
</feature>
<feature type="region of interest" description="Disordered" evidence="2">
    <location>
        <begin position="1"/>
        <end position="24"/>
    </location>
</feature>
<feature type="active site" description="Thioimide intermediate" evidence="1">
    <location>
        <position position="56"/>
    </location>
</feature>
<feature type="active site" description="Proton donor" evidence="1">
    <location>
        <position position="63"/>
    </location>
</feature>
<feature type="binding site" evidence="1">
    <location>
        <begin position="78"/>
        <end position="80"/>
    </location>
    <ligand>
        <name>substrate</name>
    </ligand>
</feature>
<feature type="binding site" evidence="1">
    <location>
        <begin position="97"/>
        <end position="98"/>
    </location>
    <ligand>
        <name>substrate</name>
    </ligand>
</feature>
<keyword id="KW-0963">Cytoplasm</keyword>
<keyword id="KW-0521">NADP</keyword>
<keyword id="KW-0560">Oxidoreductase</keyword>
<keyword id="KW-0671">Queuosine biosynthesis</keyword>
<keyword id="KW-1185">Reference proteome</keyword>
<gene>
    <name evidence="1" type="primary">queF</name>
    <name type="ordered locus">DVU_0963</name>
</gene>
<evidence type="ECO:0000255" key="1">
    <source>
        <dbReference type="HAMAP-Rule" id="MF_00818"/>
    </source>
</evidence>
<evidence type="ECO:0000256" key="2">
    <source>
        <dbReference type="SAM" id="MobiDB-lite"/>
    </source>
</evidence>
<comment type="function">
    <text evidence="1">Catalyzes the NADPH-dependent reduction of 7-cyano-7-deazaguanine (preQ0) to 7-aminomethyl-7-deazaguanine (preQ1).</text>
</comment>
<comment type="catalytic activity">
    <reaction evidence="1">
        <text>7-aminomethyl-7-carbaguanine + 2 NADP(+) = 7-cyano-7-deazaguanine + 2 NADPH + 3 H(+)</text>
        <dbReference type="Rhea" id="RHEA:13409"/>
        <dbReference type="ChEBI" id="CHEBI:15378"/>
        <dbReference type="ChEBI" id="CHEBI:45075"/>
        <dbReference type="ChEBI" id="CHEBI:57783"/>
        <dbReference type="ChEBI" id="CHEBI:58349"/>
        <dbReference type="ChEBI" id="CHEBI:58703"/>
        <dbReference type="EC" id="1.7.1.13"/>
    </reaction>
</comment>
<comment type="pathway">
    <text evidence="1">tRNA modification; tRNA-queuosine biosynthesis.</text>
</comment>
<comment type="subcellular location">
    <subcellularLocation>
        <location evidence="1">Cytoplasm</location>
    </subcellularLocation>
</comment>
<comment type="similarity">
    <text evidence="1">Belongs to the GTP cyclohydrolase I family. QueF type 1 subfamily.</text>
</comment>